<sequence>MPVLHNRISNDALKAKMLAESEPRTTISFYKYFHIADPKVTRDALYQLFTALNVFGRVYLAHEGINAQISVPASNVETFRAQLYAFDPALEGLRLNIALDDDGKSFWVLRMKVRDRIVADGIDDPHFDASNVGEYLQAAEVNAMLDDPDALFIDMRNHYEYEVGHFENALEIPADTFREQLPKAVEMMQAHKDKKIVMYCTGGIRCEKASAWMKHNGFNKVWHIEGGVIEYARKAREQGLPVRFIGKNFVFDERMGERISDEIIAHCHQCGAPCDSHTNCKNDGCHLLFIQCPVCAEKYKGCCSEICCEESALPPDEQRRRRAGRENGNKIFNKSRGRLNTTLGIPDPTE</sequence>
<protein>
    <recommendedName>
        <fullName evidence="2">tRNA uridine(34) hydroxylase</fullName>
        <ecNumber evidence="2">1.14.-.-</ecNumber>
    </recommendedName>
    <alternativeName>
        <fullName evidence="2">tRNA hydroxylation protein O</fullName>
    </alternativeName>
</protein>
<name>TRHO_ECOK1</name>
<gene>
    <name evidence="2" type="primary">trhO</name>
    <name type="synonym">yceA</name>
    <name type="ordered locus">Ecok1_09470</name>
    <name type="ORF">APECO1_138</name>
</gene>
<keyword id="KW-0560">Oxidoreductase</keyword>
<keyword id="KW-1185">Reference proteome</keyword>
<keyword id="KW-0819">tRNA processing</keyword>
<accession>A1A9V1</accession>
<evidence type="ECO:0000250" key="1">
    <source>
        <dbReference type="UniProtKB" id="P24188"/>
    </source>
</evidence>
<evidence type="ECO:0000255" key="2">
    <source>
        <dbReference type="HAMAP-Rule" id="MF_00469"/>
    </source>
</evidence>
<dbReference type="EC" id="1.14.-.-" evidence="2"/>
<dbReference type="EMBL" id="CP000468">
    <property type="protein sequence ID" value="ABJ00441.1"/>
    <property type="molecule type" value="Genomic_DNA"/>
</dbReference>
<dbReference type="RefSeq" id="WP_001331937.1">
    <property type="nucleotide sequence ID" value="NZ_CADILS010000019.1"/>
</dbReference>
<dbReference type="SMR" id="A1A9V1"/>
<dbReference type="KEGG" id="ecv:APECO1_138"/>
<dbReference type="HOGENOM" id="CLU_038878_1_1_6"/>
<dbReference type="Proteomes" id="UP000008216">
    <property type="component" value="Chromosome"/>
</dbReference>
<dbReference type="GO" id="GO:0016705">
    <property type="term" value="F:oxidoreductase activity, acting on paired donors, with incorporation or reduction of molecular oxygen"/>
    <property type="evidence" value="ECO:0007669"/>
    <property type="project" value="UniProtKB-UniRule"/>
</dbReference>
<dbReference type="GO" id="GO:0006400">
    <property type="term" value="P:tRNA modification"/>
    <property type="evidence" value="ECO:0007669"/>
    <property type="project" value="UniProtKB-UniRule"/>
</dbReference>
<dbReference type="CDD" id="cd01518">
    <property type="entry name" value="RHOD_YceA"/>
    <property type="match status" value="1"/>
</dbReference>
<dbReference type="Gene3D" id="3.30.70.100">
    <property type="match status" value="1"/>
</dbReference>
<dbReference type="Gene3D" id="3.40.250.10">
    <property type="entry name" value="Rhodanese-like domain"/>
    <property type="match status" value="1"/>
</dbReference>
<dbReference type="HAMAP" id="MF_00469">
    <property type="entry name" value="TrhO"/>
    <property type="match status" value="1"/>
</dbReference>
<dbReference type="InterPro" id="IPR001763">
    <property type="entry name" value="Rhodanese-like_dom"/>
</dbReference>
<dbReference type="InterPro" id="IPR036873">
    <property type="entry name" value="Rhodanese-like_dom_sf"/>
</dbReference>
<dbReference type="InterPro" id="IPR022111">
    <property type="entry name" value="Rhodanese_C"/>
</dbReference>
<dbReference type="InterPro" id="IPR020936">
    <property type="entry name" value="TrhO"/>
</dbReference>
<dbReference type="InterPro" id="IPR040503">
    <property type="entry name" value="TRHO_N"/>
</dbReference>
<dbReference type="NCBIfam" id="NF001133">
    <property type="entry name" value="PRK00142.1-1"/>
    <property type="match status" value="1"/>
</dbReference>
<dbReference type="PANTHER" id="PTHR43846:SF1">
    <property type="entry name" value="TRNA URIDINE(34) HYDROXYLASE"/>
    <property type="match status" value="1"/>
</dbReference>
<dbReference type="PANTHER" id="PTHR43846">
    <property type="entry name" value="UPF0176 PROTEIN YCEA"/>
    <property type="match status" value="1"/>
</dbReference>
<dbReference type="Pfam" id="PF00581">
    <property type="entry name" value="Rhodanese"/>
    <property type="match status" value="1"/>
</dbReference>
<dbReference type="Pfam" id="PF12368">
    <property type="entry name" value="Rhodanese_C"/>
    <property type="match status" value="1"/>
</dbReference>
<dbReference type="Pfam" id="PF17773">
    <property type="entry name" value="UPF0176_N"/>
    <property type="match status" value="1"/>
</dbReference>
<dbReference type="SMART" id="SM00450">
    <property type="entry name" value="RHOD"/>
    <property type="match status" value="1"/>
</dbReference>
<dbReference type="SUPFAM" id="SSF52821">
    <property type="entry name" value="Rhodanese/Cell cycle control phosphatase"/>
    <property type="match status" value="1"/>
</dbReference>
<dbReference type="PROSITE" id="PS50206">
    <property type="entry name" value="RHODANESE_3"/>
    <property type="match status" value="1"/>
</dbReference>
<comment type="function">
    <text evidence="1">Catalyzes oxygen-dependent 5-hydroxyuridine (ho5U) modification at position 34 in tRNAs, the first step in 5-carboxymethoxyuridine (cmo5U) biosynthesis. May be part of an alternate pathway, which is able to bypass cmo5U biogenesis in a subset of tRNAs under aerobic conditions.</text>
</comment>
<comment type="catalytic activity">
    <reaction evidence="2">
        <text>uridine(34) in tRNA + AH2 + O2 = 5-hydroxyuridine(34) in tRNA + A + H2O</text>
        <dbReference type="Rhea" id="RHEA:64224"/>
        <dbReference type="Rhea" id="RHEA-COMP:11727"/>
        <dbReference type="Rhea" id="RHEA-COMP:13381"/>
        <dbReference type="ChEBI" id="CHEBI:13193"/>
        <dbReference type="ChEBI" id="CHEBI:15377"/>
        <dbReference type="ChEBI" id="CHEBI:15379"/>
        <dbReference type="ChEBI" id="CHEBI:17499"/>
        <dbReference type="ChEBI" id="CHEBI:65315"/>
        <dbReference type="ChEBI" id="CHEBI:136877"/>
    </reaction>
</comment>
<comment type="similarity">
    <text evidence="2">Belongs to the TrhO family.</text>
</comment>
<proteinExistence type="inferred from homology"/>
<feature type="chain" id="PRO_1000013737" description="tRNA uridine(34) hydroxylase">
    <location>
        <begin position="1"/>
        <end position="350"/>
    </location>
</feature>
<feature type="domain" description="Rhodanese" evidence="2">
    <location>
        <begin position="146"/>
        <end position="240"/>
    </location>
</feature>
<feature type="active site" description="Cysteine persulfide intermediate" evidence="2">
    <location>
        <position position="200"/>
    </location>
</feature>
<organism>
    <name type="scientific">Escherichia coli O1:K1 / APEC</name>
    <dbReference type="NCBI Taxonomy" id="405955"/>
    <lineage>
        <taxon>Bacteria</taxon>
        <taxon>Pseudomonadati</taxon>
        <taxon>Pseudomonadota</taxon>
        <taxon>Gammaproteobacteria</taxon>
        <taxon>Enterobacterales</taxon>
        <taxon>Enterobacteriaceae</taxon>
        <taxon>Escherichia</taxon>
    </lineage>
</organism>
<reference key="1">
    <citation type="journal article" date="2007" name="J. Bacteriol.">
        <title>The genome sequence of avian pathogenic Escherichia coli strain O1:K1:H7 shares strong similarities with human extraintestinal pathogenic E. coli genomes.</title>
        <authorList>
            <person name="Johnson T.J."/>
            <person name="Kariyawasam S."/>
            <person name="Wannemuehler Y."/>
            <person name="Mangiamele P."/>
            <person name="Johnson S.J."/>
            <person name="Doetkott C."/>
            <person name="Skyberg J.A."/>
            <person name="Lynne A.M."/>
            <person name="Johnson J.R."/>
            <person name="Nolan L.K."/>
        </authorList>
    </citation>
    <scope>NUCLEOTIDE SEQUENCE [LARGE SCALE GENOMIC DNA]</scope>
</reference>